<comment type="function">
    <text evidence="1">Transfers a succinyl group from succinyl-CoA to L-homoserine, forming succinyl-L-homoserine.</text>
</comment>
<comment type="catalytic activity">
    <reaction evidence="1">
        <text>L-homoserine + succinyl-CoA = O-succinyl-L-homoserine + CoA</text>
        <dbReference type="Rhea" id="RHEA:22008"/>
        <dbReference type="ChEBI" id="CHEBI:57287"/>
        <dbReference type="ChEBI" id="CHEBI:57292"/>
        <dbReference type="ChEBI" id="CHEBI:57476"/>
        <dbReference type="ChEBI" id="CHEBI:57661"/>
        <dbReference type="EC" id="2.3.1.46"/>
    </reaction>
</comment>
<comment type="pathway">
    <text evidence="1">Amino-acid biosynthesis; L-methionine biosynthesis via de novo pathway; O-succinyl-L-homoserine from L-homoserine: step 1/1.</text>
</comment>
<comment type="subcellular location">
    <subcellularLocation>
        <location evidence="1">Cytoplasm</location>
    </subcellularLocation>
</comment>
<comment type="similarity">
    <text evidence="1">Belongs to the MetA family.</text>
</comment>
<name>METAS_TOLAT</name>
<evidence type="ECO:0000255" key="1">
    <source>
        <dbReference type="HAMAP-Rule" id="MF_00295"/>
    </source>
</evidence>
<accession>C4L881</accession>
<keyword id="KW-0012">Acyltransferase</keyword>
<keyword id="KW-0028">Amino-acid biosynthesis</keyword>
<keyword id="KW-0963">Cytoplasm</keyword>
<keyword id="KW-0486">Methionine biosynthesis</keyword>
<keyword id="KW-1185">Reference proteome</keyword>
<keyword id="KW-0808">Transferase</keyword>
<feature type="chain" id="PRO_1000204925" description="Homoserine O-succinyltransferase">
    <location>
        <begin position="1"/>
        <end position="315"/>
    </location>
</feature>
<feature type="active site" description="Acyl-thioester intermediate" evidence="1">
    <location>
        <position position="142"/>
    </location>
</feature>
<feature type="active site" description="Proton acceptor" evidence="1">
    <location>
        <position position="235"/>
    </location>
</feature>
<feature type="active site" evidence="1">
    <location>
        <position position="237"/>
    </location>
</feature>
<feature type="binding site" evidence="1">
    <location>
        <position position="163"/>
    </location>
    <ligand>
        <name>substrate</name>
    </ligand>
</feature>
<feature type="binding site" evidence="1">
    <location>
        <position position="192"/>
    </location>
    <ligand>
        <name>substrate</name>
    </ligand>
</feature>
<feature type="binding site" evidence="1">
    <location>
        <position position="249"/>
    </location>
    <ligand>
        <name>substrate</name>
    </ligand>
</feature>
<feature type="site" description="Important for acyl-CoA specificity" evidence="1">
    <location>
        <position position="111"/>
    </location>
</feature>
<feature type="site" description="Important for substrate specificity" evidence="1">
    <location>
        <position position="192"/>
    </location>
</feature>
<dbReference type="EC" id="2.3.1.46" evidence="1"/>
<dbReference type="EMBL" id="CP001616">
    <property type="protein sequence ID" value="ACQ93727.1"/>
    <property type="molecule type" value="Genomic_DNA"/>
</dbReference>
<dbReference type="RefSeq" id="WP_015879195.1">
    <property type="nucleotide sequence ID" value="NC_012691.1"/>
</dbReference>
<dbReference type="SMR" id="C4L881"/>
<dbReference type="STRING" id="595494.Tola_2128"/>
<dbReference type="KEGG" id="tau:Tola_2128"/>
<dbReference type="eggNOG" id="COG1897">
    <property type="taxonomic scope" value="Bacteria"/>
</dbReference>
<dbReference type="HOGENOM" id="CLU_057851_0_1_6"/>
<dbReference type="OrthoDB" id="9772423at2"/>
<dbReference type="UniPathway" id="UPA00051">
    <property type="reaction ID" value="UER00075"/>
</dbReference>
<dbReference type="Proteomes" id="UP000009073">
    <property type="component" value="Chromosome"/>
</dbReference>
<dbReference type="GO" id="GO:0005737">
    <property type="term" value="C:cytoplasm"/>
    <property type="evidence" value="ECO:0007669"/>
    <property type="project" value="UniProtKB-SubCell"/>
</dbReference>
<dbReference type="GO" id="GO:0004414">
    <property type="term" value="F:homoserine O-acetyltransferase activity"/>
    <property type="evidence" value="ECO:0007669"/>
    <property type="project" value="UniProtKB-UniRule"/>
</dbReference>
<dbReference type="GO" id="GO:0008899">
    <property type="term" value="F:homoserine O-succinyltransferase activity"/>
    <property type="evidence" value="ECO:0007669"/>
    <property type="project" value="UniProtKB-EC"/>
</dbReference>
<dbReference type="GO" id="GO:0019281">
    <property type="term" value="P:L-methionine biosynthetic process from homoserine via O-succinyl-L-homoserine and cystathionine"/>
    <property type="evidence" value="ECO:0007669"/>
    <property type="project" value="InterPro"/>
</dbReference>
<dbReference type="CDD" id="cd03131">
    <property type="entry name" value="GATase1_HTS"/>
    <property type="match status" value="1"/>
</dbReference>
<dbReference type="FunFam" id="3.40.50.880:FF:000004">
    <property type="entry name" value="Homoserine O-succinyltransferase"/>
    <property type="match status" value="1"/>
</dbReference>
<dbReference type="Gene3D" id="3.40.50.880">
    <property type="match status" value="1"/>
</dbReference>
<dbReference type="HAMAP" id="MF_00295">
    <property type="entry name" value="MetA_acyltransf"/>
    <property type="match status" value="1"/>
</dbReference>
<dbReference type="InterPro" id="IPR029062">
    <property type="entry name" value="Class_I_gatase-like"/>
</dbReference>
<dbReference type="InterPro" id="IPR005697">
    <property type="entry name" value="HST_MetA"/>
</dbReference>
<dbReference type="InterPro" id="IPR033752">
    <property type="entry name" value="MetA_family"/>
</dbReference>
<dbReference type="NCBIfam" id="TIGR01001">
    <property type="entry name" value="metA"/>
    <property type="match status" value="1"/>
</dbReference>
<dbReference type="PANTHER" id="PTHR20919">
    <property type="entry name" value="HOMOSERINE O-SUCCINYLTRANSFERASE"/>
    <property type="match status" value="1"/>
</dbReference>
<dbReference type="PANTHER" id="PTHR20919:SF0">
    <property type="entry name" value="HOMOSERINE O-SUCCINYLTRANSFERASE"/>
    <property type="match status" value="1"/>
</dbReference>
<dbReference type="Pfam" id="PF04204">
    <property type="entry name" value="HTS"/>
    <property type="match status" value="1"/>
</dbReference>
<dbReference type="PIRSF" id="PIRSF000450">
    <property type="entry name" value="H_ser_succinyltr"/>
    <property type="match status" value="1"/>
</dbReference>
<dbReference type="SUPFAM" id="SSF52317">
    <property type="entry name" value="Class I glutamine amidotransferase-like"/>
    <property type="match status" value="1"/>
</dbReference>
<gene>
    <name evidence="1" type="primary">metAS</name>
    <name type="ordered locus">Tola_2128</name>
</gene>
<proteinExistence type="inferred from homology"/>
<reference key="1">
    <citation type="submission" date="2009-05" db="EMBL/GenBank/DDBJ databases">
        <title>Complete sequence of Tolumonas auensis DSM 9187.</title>
        <authorList>
            <consortium name="US DOE Joint Genome Institute"/>
            <person name="Lucas S."/>
            <person name="Copeland A."/>
            <person name="Lapidus A."/>
            <person name="Glavina del Rio T."/>
            <person name="Tice H."/>
            <person name="Bruce D."/>
            <person name="Goodwin L."/>
            <person name="Pitluck S."/>
            <person name="Chertkov O."/>
            <person name="Brettin T."/>
            <person name="Detter J.C."/>
            <person name="Han C."/>
            <person name="Larimer F."/>
            <person name="Land M."/>
            <person name="Hauser L."/>
            <person name="Kyrpides N."/>
            <person name="Mikhailova N."/>
            <person name="Spring S."/>
            <person name="Beller H."/>
        </authorList>
    </citation>
    <scope>NUCLEOTIDE SEQUENCE [LARGE SCALE GENOMIC DNA]</scope>
    <source>
        <strain>DSM 9187 / NBRC 110442 / TA 4</strain>
    </source>
</reference>
<protein>
    <recommendedName>
        <fullName evidence="1">Homoserine O-succinyltransferase</fullName>
        <shortName evidence="1">HST</shortName>
        <ecNumber evidence="1">2.3.1.46</ecNumber>
    </recommendedName>
    <alternativeName>
        <fullName evidence="1">Homoserine transsuccinylase</fullName>
        <shortName evidence="1">HTS</shortName>
    </alternativeName>
</protein>
<sequence length="315" mass="36268">MPIKIPDQLPAAGVLTEENIFVMTDSRAAHQDIRPLKVLLLNLMPKKIETEIQLMRMLSNSPLQVLVDLLRIDDRESKNTPRIHVETFYQDFDQIKDNKYDGLIITGAPLGLVQFDDVVYWDTLIKIIEWSKKNVTSTLFLCWAAQAALKVLYGLEKQTRGEKLSGVYYHHKLEQQDPLVRGFDDVFLAPHSRYASFEGDFIRANTDLRIFAESEEAGVYLAATKDCRQVFVTGHPEYDAETLHHEYHRDLTAGINPNVPANYYPGNDPARPPYHSWRSHGHLLFSNWLNYYVYQLTPYDLDTLDQKAGGVDWEI</sequence>
<organism>
    <name type="scientific">Tolumonas auensis (strain DSM 9187 / NBRC 110442 / TA 4)</name>
    <dbReference type="NCBI Taxonomy" id="595494"/>
    <lineage>
        <taxon>Bacteria</taxon>
        <taxon>Pseudomonadati</taxon>
        <taxon>Pseudomonadota</taxon>
        <taxon>Gammaproteobacteria</taxon>
        <taxon>Aeromonadales</taxon>
        <taxon>Aeromonadaceae</taxon>
        <taxon>Tolumonas</taxon>
    </lineage>
</organism>